<feature type="chain" id="PRO_1000072927" description="Imidazole glycerol phosphate synthase subunit HisF">
    <location>
        <begin position="1"/>
        <end position="256"/>
    </location>
</feature>
<feature type="active site" evidence="1">
    <location>
        <position position="11"/>
    </location>
</feature>
<feature type="active site" evidence="1">
    <location>
        <position position="130"/>
    </location>
</feature>
<dbReference type="EC" id="4.3.2.10" evidence="1"/>
<dbReference type="EMBL" id="CP000713">
    <property type="protein sequence ID" value="ABQ95226.1"/>
    <property type="molecule type" value="Genomic_DNA"/>
</dbReference>
<dbReference type="SMR" id="A5WHT5"/>
<dbReference type="STRING" id="349106.PsycPRwf_2286"/>
<dbReference type="KEGG" id="prw:PsycPRwf_2286"/>
<dbReference type="eggNOG" id="COG0107">
    <property type="taxonomic scope" value="Bacteria"/>
</dbReference>
<dbReference type="HOGENOM" id="CLU_048577_4_0_6"/>
<dbReference type="UniPathway" id="UPA00031">
    <property type="reaction ID" value="UER00010"/>
</dbReference>
<dbReference type="GO" id="GO:0005737">
    <property type="term" value="C:cytoplasm"/>
    <property type="evidence" value="ECO:0007669"/>
    <property type="project" value="UniProtKB-SubCell"/>
</dbReference>
<dbReference type="GO" id="GO:0000107">
    <property type="term" value="F:imidazoleglycerol-phosphate synthase activity"/>
    <property type="evidence" value="ECO:0007669"/>
    <property type="project" value="UniProtKB-UniRule"/>
</dbReference>
<dbReference type="GO" id="GO:0016829">
    <property type="term" value="F:lyase activity"/>
    <property type="evidence" value="ECO:0007669"/>
    <property type="project" value="UniProtKB-KW"/>
</dbReference>
<dbReference type="GO" id="GO:0000105">
    <property type="term" value="P:L-histidine biosynthetic process"/>
    <property type="evidence" value="ECO:0007669"/>
    <property type="project" value="UniProtKB-UniRule"/>
</dbReference>
<dbReference type="CDD" id="cd04731">
    <property type="entry name" value="HisF"/>
    <property type="match status" value="1"/>
</dbReference>
<dbReference type="FunFam" id="3.20.20.70:FF:000006">
    <property type="entry name" value="Imidazole glycerol phosphate synthase subunit HisF"/>
    <property type="match status" value="1"/>
</dbReference>
<dbReference type="Gene3D" id="3.20.20.70">
    <property type="entry name" value="Aldolase class I"/>
    <property type="match status" value="1"/>
</dbReference>
<dbReference type="HAMAP" id="MF_01013">
    <property type="entry name" value="HisF"/>
    <property type="match status" value="1"/>
</dbReference>
<dbReference type="InterPro" id="IPR013785">
    <property type="entry name" value="Aldolase_TIM"/>
</dbReference>
<dbReference type="InterPro" id="IPR006062">
    <property type="entry name" value="His_biosynth"/>
</dbReference>
<dbReference type="InterPro" id="IPR004651">
    <property type="entry name" value="HisF"/>
</dbReference>
<dbReference type="InterPro" id="IPR050064">
    <property type="entry name" value="IGPS_HisA/HisF"/>
</dbReference>
<dbReference type="InterPro" id="IPR011060">
    <property type="entry name" value="RibuloseP-bd_barrel"/>
</dbReference>
<dbReference type="NCBIfam" id="TIGR00735">
    <property type="entry name" value="hisF"/>
    <property type="match status" value="1"/>
</dbReference>
<dbReference type="PANTHER" id="PTHR21235:SF2">
    <property type="entry name" value="IMIDAZOLE GLYCEROL PHOSPHATE SYNTHASE HISHF"/>
    <property type="match status" value="1"/>
</dbReference>
<dbReference type="PANTHER" id="PTHR21235">
    <property type="entry name" value="IMIDAZOLE GLYCEROL PHOSPHATE SYNTHASE SUBUNIT HISF/H IGP SYNTHASE SUBUNIT HISF/H"/>
    <property type="match status" value="1"/>
</dbReference>
<dbReference type="Pfam" id="PF00977">
    <property type="entry name" value="His_biosynth"/>
    <property type="match status" value="1"/>
</dbReference>
<dbReference type="SUPFAM" id="SSF51366">
    <property type="entry name" value="Ribulose-phoshate binding barrel"/>
    <property type="match status" value="1"/>
</dbReference>
<name>HIS6_PSYWF</name>
<sequence length="256" mass="27241">MLAKRIIPCLDVDNGRVVKGVQFVDIKDAGDPVEVARRYNEQGADEITFLDITATHHGRETTYDMVERIAETVFVPLTVGGGVRKIEDIRNLLNAGADKVAINSAAVFTPEFVAEAAAKFGSQCIVVAIDAKQVEDVEGQPRWEIFTHGGRKPTGLDAVAWAVKMAELGAGELLVTSMDGDGTKKGYDLALMKAITSAVNVPVIASGGVGNLQHLADGVLEGGADAVLAASIFHFGEYSIAEAKQFMAKQGIEMRL</sequence>
<organism>
    <name type="scientific">Psychrobacter sp. (strain PRwf-1)</name>
    <dbReference type="NCBI Taxonomy" id="349106"/>
    <lineage>
        <taxon>Bacteria</taxon>
        <taxon>Pseudomonadati</taxon>
        <taxon>Pseudomonadota</taxon>
        <taxon>Gammaproteobacteria</taxon>
        <taxon>Moraxellales</taxon>
        <taxon>Moraxellaceae</taxon>
        <taxon>Psychrobacter</taxon>
    </lineage>
</organism>
<accession>A5WHT5</accession>
<evidence type="ECO:0000255" key="1">
    <source>
        <dbReference type="HAMAP-Rule" id="MF_01013"/>
    </source>
</evidence>
<gene>
    <name evidence="1" type="primary">hisF</name>
    <name type="ordered locus">PsycPRwf_2286</name>
</gene>
<proteinExistence type="inferred from homology"/>
<keyword id="KW-0028">Amino-acid biosynthesis</keyword>
<keyword id="KW-0963">Cytoplasm</keyword>
<keyword id="KW-0368">Histidine biosynthesis</keyword>
<keyword id="KW-0456">Lyase</keyword>
<comment type="function">
    <text evidence="1">IGPS catalyzes the conversion of PRFAR and glutamine to IGP, AICAR and glutamate. The HisF subunit catalyzes the cyclization activity that produces IGP and AICAR from PRFAR using the ammonia provided by the HisH subunit.</text>
</comment>
<comment type="catalytic activity">
    <reaction evidence="1">
        <text>5-[(5-phospho-1-deoxy-D-ribulos-1-ylimino)methylamino]-1-(5-phospho-beta-D-ribosyl)imidazole-4-carboxamide + L-glutamine = D-erythro-1-(imidazol-4-yl)glycerol 3-phosphate + 5-amino-1-(5-phospho-beta-D-ribosyl)imidazole-4-carboxamide + L-glutamate + H(+)</text>
        <dbReference type="Rhea" id="RHEA:24793"/>
        <dbReference type="ChEBI" id="CHEBI:15378"/>
        <dbReference type="ChEBI" id="CHEBI:29985"/>
        <dbReference type="ChEBI" id="CHEBI:58278"/>
        <dbReference type="ChEBI" id="CHEBI:58359"/>
        <dbReference type="ChEBI" id="CHEBI:58475"/>
        <dbReference type="ChEBI" id="CHEBI:58525"/>
        <dbReference type="EC" id="4.3.2.10"/>
    </reaction>
</comment>
<comment type="pathway">
    <text evidence="1">Amino-acid biosynthesis; L-histidine biosynthesis; L-histidine from 5-phospho-alpha-D-ribose 1-diphosphate: step 5/9.</text>
</comment>
<comment type="subunit">
    <text evidence="1">Heterodimer of HisH and HisF.</text>
</comment>
<comment type="subcellular location">
    <subcellularLocation>
        <location evidence="1">Cytoplasm</location>
    </subcellularLocation>
</comment>
<comment type="similarity">
    <text evidence="1">Belongs to the HisA/HisF family.</text>
</comment>
<reference key="1">
    <citation type="submission" date="2007-05" db="EMBL/GenBank/DDBJ databases">
        <title>Complete sequence of chromosome of Psychrobacter sp. PRwf-1.</title>
        <authorList>
            <consortium name="US DOE Joint Genome Institute"/>
            <person name="Copeland A."/>
            <person name="Lucas S."/>
            <person name="Lapidus A."/>
            <person name="Barry K."/>
            <person name="Detter J.C."/>
            <person name="Glavina del Rio T."/>
            <person name="Hammon N."/>
            <person name="Israni S."/>
            <person name="Dalin E."/>
            <person name="Tice H."/>
            <person name="Pitluck S."/>
            <person name="Chain P."/>
            <person name="Malfatti S."/>
            <person name="Shin M."/>
            <person name="Vergez L."/>
            <person name="Schmutz J."/>
            <person name="Larimer F."/>
            <person name="Land M."/>
            <person name="Hauser L."/>
            <person name="Kyrpides N."/>
            <person name="Kim E."/>
            <person name="Tiedje J."/>
            <person name="Richardson P."/>
        </authorList>
    </citation>
    <scope>NUCLEOTIDE SEQUENCE [LARGE SCALE GENOMIC DNA]</scope>
    <source>
        <strain>PRwf-1</strain>
    </source>
</reference>
<protein>
    <recommendedName>
        <fullName evidence="1">Imidazole glycerol phosphate synthase subunit HisF</fullName>
        <ecNumber evidence="1">4.3.2.10</ecNumber>
    </recommendedName>
    <alternativeName>
        <fullName evidence="1">IGP synthase cyclase subunit</fullName>
    </alternativeName>
    <alternativeName>
        <fullName evidence="1">IGP synthase subunit HisF</fullName>
    </alternativeName>
    <alternativeName>
        <fullName evidence="1">ImGP synthase subunit HisF</fullName>
        <shortName evidence="1">IGPS subunit HisF</shortName>
    </alternativeName>
</protein>